<reference key="1">
    <citation type="submission" date="1998-09" db="EMBL/GenBank/DDBJ databases">
        <title>Rat GM3 synthase cDNA.</title>
        <authorList>
            <person name="Ishii A."/>
            <person name="Saito M."/>
        </authorList>
    </citation>
    <scope>NUCLEOTIDE SEQUENCE [MRNA]</scope>
    <source>
        <strain>Sprague-Dawley</strain>
        <tissue>Brain</tissue>
    </source>
</reference>
<reference key="2">
    <citation type="journal article" date="2004" name="Genome Res.">
        <title>The status, quality, and expansion of the NIH full-length cDNA project: the Mammalian Gene Collection (MGC).</title>
        <authorList>
            <consortium name="The MGC Project Team"/>
        </authorList>
    </citation>
    <scope>NUCLEOTIDE SEQUENCE [LARGE SCALE MRNA]</scope>
    <source>
        <tissue>Kidney</tissue>
    </source>
</reference>
<sequence>MPNEFTSAKLRSDCSRTSLQWYTQTQHKMRRPSLLLKDILKCMLVVFGVWLLYILKLNYTAEECDMKKLNYVDPARIKRAHRNTQEVFQKECRPGHAKKTMDLLFKGKYSMDLEPFVQKIPTASEAELKYDPPFGFRKFSSKVQSLLDMLPEHDFPEHLRAKHCKRCVVIGNGGILHGLELGHALNQFDVVIRLNSAPIEGYSEHVGNKTTIRMTYPEGAPLSDAEYYANDLFVAVLFKSVDFKWLQAMVKNESLPFWIRLFFWKQVAEKIPLQPKHFRILNPVIIKETAFDILQYSEPQSRFWGHDKNIPTIGIIAIVLATHLCDEVSLAGFGYDLSQPRTPLHYFDSQCMGAMNWQVMHNVTTETQFLQKLIKEGVVQDLSGGIH</sequence>
<feature type="chain" id="PRO_0000334618" description="Lactosylceramide alpha-2,3-sialyltransferase">
    <location>
        <begin position="1"/>
        <end position="387"/>
    </location>
</feature>
<feature type="topological domain" description="Cytoplasmic" evidence="3">
    <location>
        <begin position="1"/>
        <end position="33"/>
    </location>
</feature>
<feature type="transmembrane region" description="Helical; Signal-anchor for type II membrane protein" evidence="3">
    <location>
        <begin position="34"/>
        <end position="54"/>
    </location>
</feature>
<feature type="topological domain" description="Extracellular" evidence="3">
    <location>
        <begin position="55"/>
        <end position="387"/>
    </location>
</feature>
<feature type="glycosylation site" description="N-linked (GlcNAc...) asparagine" evidence="3">
    <location>
        <position position="58"/>
    </location>
</feature>
<feature type="glycosylation site" description="N-linked (GlcNAc...) asparagine" evidence="3">
    <location>
        <position position="208"/>
    </location>
</feature>
<feature type="disulfide bond" evidence="1">
    <location>
        <begin position="167"/>
        <end position="325"/>
    </location>
</feature>
<keyword id="KW-1015">Disulfide bond</keyword>
<keyword id="KW-0325">Glycoprotein</keyword>
<keyword id="KW-0328">Glycosyltransferase</keyword>
<keyword id="KW-0333">Golgi apparatus</keyword>
<keyword id="KW-0443">Lipid metabolism</keyword>
<keyword id="KW-0472">Membrane</keyword>
<keyword id="KW-1185">Reference proteome</keyword>
<keyword id="KW-0735">Signal-anchor</keyword>
<keyword id="KW-0808">Transferase</keyword>
<keyword id="KW-0812">Transmembrane</keyword>
<keyword id="KW-1133">Transmembrane helix</keyword>
<name>SIAT9_RAT</name>
<protein>
    <recommendedName>
        <fullName>Lactosylceramide alpha-2,3-sialyltransferase</fullName>
        <ecNumber evidence="2">2.4.3.9</ecNumber>
    </recommendedName>
    <alternativeName>
        <fullName>CMP-NeuAc:lactosylceramide alpha-2,3-sialyltransferase</fullName>
    </alternativeName>
    <alternativeName>
        <fullName>Ganglioside GM3 synthase</fullName>
    </alternativeName>
    <alternativeName>
        <fullName>ST3Gal V</fullName>
        <shortName>ST3GalV</shortName>
    </alternativeName>
    <alternativeName>
        <fullName>Sialyltransferase 9</fullName>
    </alternativeName>
</protein>
<accession>Q68G12</accession>
<accession>O88830</accession>
<dbReference type="EC" id="2.4.3.9" evidence="2"/>
<dbReference type="EMBL" id="AB018049">
    <property type="protein sequence ID" value="BAA33492.1"/>
    <property type="status" value="ALT_INIT"/>
    <property type="molecule type" value="mRNA"/>
</dbReference>
<dbReference type="EMBL" id="BC078798">
    <property type="protein sequence ID" value="AAH78798.1"/>
    <property type="molecule type" value="mRNA"/>
</dbReference>
<dbReference type="RefSeq" id="NP_001385642.1">
    <property type="nucleotide sequence ID" value="NM_001398713.1"/>
</dbReference>
<dbReference type="RefSeq" id="NP_112627.2">
    <property type="nucleotide sequence ID" value="NM_031337.3"/>
</dbReference>
<dbReference type="RefSeq" id="XP_006236739.1">
    <property type="nucleotide sequence ID" value="XM_006236677.1"/>
</dbReference>
<dbReference type="RefSeq" id="XP_006236741.1">
    <property type="nucleotide sequence ID" value="XM_006236679.3"/>
</dbReference>
<dbReference type="RefSeq" id="XP_008761218.1">
    <property type="nucleotide sequence ID" value="XM_008762996.1"/>
</dbReference>
<dbReference type="SMR" id="Q68G12"/>
<dbReference type="FunCoup" id="Q68G12">
    <property type="interactions" value="759"/>
</dbReference>
<dbReference type="STRING" id="10116.ENSRNOP00000042426"/>
<dbReference type="CAZy" id="GT29">
    <property type="family name" value="Glycosyltransferase Family 29"/>
</dbReference>
<dbReference type="GlyCosmos" id="Q68G12">
    <property type="glycosylation" value="2 sites, No reported glycans"/>
</dbReference>
<dbReference type="GlyGen" id="Q68G12">
    <property type="glycosylation" value="2 sites"/>
</dbReference>
<dbReference type="PhosphoSitePlus" id="Q68G12"/>
<dbReference type="PaxDb" id="10116-ENSRNOP00000042426"/>
<dbReference type="Ensembl" id="ENSRNOT00000050249.3">
    <property type="protein sequence ID" value="ENSRNOP00000042426.1"/>
    <property type="gene ID" value="ENSRNOG00000010284.7"/>
</dbReference>
<dbReference type="GeneID" id="83505"/>
<dbReference type="KEGG" id="rno:83505"/>
<dbReference type="UCSC" id="RGD:620875">
    <property type="organism name" value="rat"/>
</dbReference>
<dbReference type="AGR" id="RGD:620875"/>
<dbReference type="CTD" id="8869"/>
<dbReference type="RGD" id="620875">
    <property type="gene designation" value="St3gal5"/>
</dbReference>
<dbReference type="eggNOG" id="KOG2692">
    <property type="taxonomic scope" value="Eukaryota"/>
</dbReference>
<dbReference type="GeneTree" id="ENSGT00940000157929"/>
<dbReference type="InParanoid" id="Q68G12"/>
<dbReference type="OMA" id="MHYVDPE"/>
<dbReference type="PhylomeDB" id="Q68G12"/>
<dbReference type="Reactome" id="R-RNO-4085001">
    <property type="pathway name" value="Sialic acid metabolism"/>
</dbReference>
<dbReference type="Reactome" id="R-RNO-9840309">
    <property type="pathway name" value="Glycosphingolipid biosynthesis"/>
</dbReference>
<dbReference type="PRO" id="PR:Q68G12"/>
<dbReference type="Proteomes" id="UP000002494">
    <property type="component" value="Chromosome 4"/>
</dbReference>
<dbReference type="Bgee" id="ENSRNOG00000010284">
    <property type="expression patterns" value="Expressed in heart and 19 other cell types or tissues"/>
</dbReference>
<dbReference type="ExpressionAtlas" id="Q68G12">
    <property type="expression patterns" value="baseline and differential"/>
</dbReference>
<dbReference type="GO" id="GO:0000139">
    <property type="term" value="C:Golgi membrane"/>
    <property type="evidence" value="ECO:0007669"/>
    <property type="project" value="UniProtKB-SubCell"/>
</dbReference>
<dbReference type="GO" id="GO:0047291">
    <property type="term" value="F:lactosylceramide alpha-2,3-sialyltransferase activity"/>
    <property type="evidence" value="ECO:0000250"/>
    <property type="project" value="UniProtKB"/>
</dbReference>
<dbReference type="GO" id="GO:0006629">
    <property type="term" value="P:lipid metabolic process"/>
    <property type="evidence" value="ECO:0007669"/>
    <property type="project" value="UniProtKB-KW"/>
</dbReference>
<dbReference type="GO" id="GO:0006486">
    <property type="term" value="P:protein glycosylation"/>
    <property type="evidence" value="ECO:0000318"/>
    <property type="project" value="GO_Central"/>
</dbReference>
<dbReference type="CDD" id="cd23983">
    <property type="entry name" value="GT29_ST3GAL5"/>
    <property type="match status" value="1"/>
</dbReference>
<dbReference type="FunFam" id="3.90.1480.20:FF:000006">
    <property type="entry name" value="ST3 beta-galactoside alpha-2,3-sialyltransferase 5"/>
    <property type="match status" value="1"/>
</dbReference>
<dbReference type="Gene3D" id="3.90.1480.20">
    <property type="entry name" value="Glycosyl transferase family 29"/>
    <property type="match status" value="1"/>
</dbReference>
<dbReference type="InterPro" id="IPR001675">
    <property type="entry name" value="Glyco_trans_29"/>
</dbReference>
<dbReference type="InterPro" id="IPR051142">
    <property type="entry name" value="Glycosyltransferase_29"/>
</dbReference>
<dbReference type="InterPro" id="IPR038578">
    <property type="entry name" value="GT29-like_sf"/>
</dbReference>
<dbReference type="InterPro" id="IPR012163">
    <property type="entry name" value="Sialyl_trans"/>
</dbReference>
<dbReference type="PANTHER" id="PTHR13713:SF60">
    <property type="entry name" value="LACTOSYLCERAMIDE ALPHA-2,3-SIALYLTRANSFERASE"/>
    <property type="match status" value="1"/>
</dbReference>
<dbReference type="PANTHER" id="PTHR13713">
    <property type="entry name" value="SIALYLTRANSFERASE"/>
    <property type="match status" value="1"/>
</dbReference>
<dbReference type="Pfam" id="PF00777">
    <property type="entry name" value="Glyco_transf_29"/>
    <property type="match status" value="1"/>
</dbReference>
<dbReference type="PIRSF" id="PIRSF005557">
    <property type="entry name" value="Sialyl_trans"/>
    <property type="match status" value="1"/>
</dbReference>
<gene>
    <name type="primary">St3gal5</name>
    <name type="synonym">Siat9</name>
</gene>
<organism>
    <name type="scientific">Rattus norvegicus</name>
    <name type="common">Rat</name>
    <dbReference type="NCBI Taxonomy" id="10116"/>
    <lineage>
        <taxon>Eukaryota</taxon>
        <taxon>Metazoa</taxon>
        <taxon>Chordata</taxon>
        <taxon>Craniata</taxon>
        <taxon>Vertebrata</taxon>
        <taxon>Euteleostomi</taxon>
        <taxon>Mammalia</taxon>
        <taxon>Eutheria</taxon>
        <taxon>Euarchontoglires</taxon>
        <taxon>Glires</taxon>
        <taxon>Rodentia</taxon>
        <taxon>Myomorpha</taxon>
        <taxon>Muroidea</taxon>
        <taxon>Muridae</taxon>
        <taxon>Murinae</taxon>
        <taxon>Rattus</taxon>
    </lineage>
</organism>
<proteinExistence type="evidence at transcript level"/>
<comment type="function">
    <text evidence="2">Transfers the sialyl group (N-acetyl-alpha-neuraminyl or NeuAc) from CMP-NeuAc to the non-reducing terminal galactose (Gal) of glycosphingolipids forming gangliosides (important molecules involved in the regulation of multiple cellular processes, including cell proliferation and differentiation, apoptosis, embryogenesis, development, and oncogenesis). Mainly involved in the biosynthesis of ganglioside GM3 but can also use different glycolipids as substrate acceptors such as D-galactosylceramide (GalCer), asialo-GM2 (GA2) and asialo-GM1 (GA1), although less preferentially than beta-D-Gal-(1-&gt;4)-beta-D-Glc-(1&lt;-&gt;1)-Cer (LacCer).</text>
</comment>
<comment type="catalytic activity">
    <reaction evidence="2">
        <text>a beta-D-Gal-(1-&gt;4)-beta-D-Glc-(1&lt;-&gt;1)-Cer(d18:1(4E)) + CMP-N-acetyl-beta-neuraminate = a ganglioside GM3 (d18:1(4E)) + CMP + H(+)</text>
        <dbReference type="Rhea" id="RHEA:18417"/>
        <dbReference type="ChEBI" id="CHEBI:15378"/>
        <dbReference type="ChEBI" id="CHEBI:17950"/>
        <dbReference type="ChEBI" id="CHEBI:57812"/>
        <dbReference type="ChEBI" id="CHEBI:60065"/>
        <dbReference type="ChEBI" id="CHEBI:60377"/>
        <dbReference type="EC" id="2.4.3.9"/>
    </reaction>
    <physiologicalReaction direction="left-to-right" evidence="2">
        <dbReference type="Rhea" id="RHEA:18418"/>
    </physiologicalReaction>
</comment>
<comment type="catalytic activity">
    <reaction evidence="2">
        <text>ganglioside GA2 (d18:1(4E)/18:0) + CMP-N-acetyl-beta-neuraminate = ganglioside GM2 (d18:1(4E)/18:0) + CMP + H(+)</text>
        <dbReference type="Rhea" id="RHEA:41776"/>
        <dbReference type="ChEBI" id="CHEBI:15378"/>
        <dbReference type="ChEBI" id="CHEBI:57812"/>
        <dbReference type="ChEBI" id="CHEBI:60377"/>
        <dbReference type="ChEBI" id="CHEBI:78485"/>
        <dbReference type="ChEBI" id="CHEBI:78486"/>
    </reaction>
    <physiologicalReaction direction="left-to-right" evidence="2">
        <dbReference type="Rhea" id="RHEA:41777"/>
    </physiologicalReaction>
</comment>
<comment type="catalytic activity">
    <reaction evidence="2">
        <text>a beta-D-Gal-(1&lt;-&gt;1')-ceramide + CMP-N-acetyl-beta-neuraminate = N-acetyl-alpha-neuraminosyl-(2-&gt;3)-beta-D-galactosyl-(1&lt;-&gt;1')-ceramide + CMP + H(+)</text>
        <dbReference type="Rhea" id="RHEA:41780"/>
        <dbReference type="ChEBI" id="CHEBI:15378"/>
        <dbReference type="ChEBI" id="CHEBI:57812"/>
        <dbReference type="ChEBI" id="CHEBI:60377"/>
        <dbReference type="ChEBI" id="CHEBI:82643"/>
        <dbReference type="ChEBI" id="CHEBI:143593"/>
    </reaction>
    <physiologicalReaction direction="left-to-right" evidence="2">
        <dbReference type="Rhea" id="RHEA:41781"/>
    </physiologicalReaction>
</comment>
<comment type="catalytic activity">
    <reaction evidence="2">
        <text>ganglioside GA1 (d18:1(4E)/18:0) + CMP-N-acetyl-beta-neuraminate = ganglioside GM1 (d18:1(4E)/18:0) + CMP + H(+)</text>
        <dbReference type="Rhea" id="RHEA:41784"/>
        <dbReference type="ChEBI" id="CHEBI:15378"/>
        <dbReference type="ChEBI" id="CHEBI:57812"/>
        <dbReference type="ChEBI" id="CHEBI:60377"/>
        <dbReference type="ChEBI" id="CHEBI:73110"/>
        <dbReference type="ChEBI" id="CHEBI:78484"/>
    </reaction>
    <physiologicalReaction direction="left-to-right" evidence="2">
        <dbReference type="Rhea" id="RHEA:41785"/>
    </physiologicalReaction>
</comment>
<comment type="subcellular location">
    <subcellularLocation>
        <location evidence="4">Golgi apparatus membrane</location>
        <topology evidence="4">Single-pass type II membrane protein</topology>
    </subcellularLocation>
</comment>
<comment type="similarity">
    <text evidence="4">Belongs to the glycosyltransferase 29 family.</text>
</comment>
<comment type="sequence caution" evidence="4">
    <conflict type="erroneous initiation">
        <sequence resource="EMBL-CDS" id="BAA33492"/>
    </conflict>
</comment>
<evidence type="ECO:0000250" key="1"/>
<evidence type="ECO:0000250" key="2">
    <source>
        <dbReference type="UniProtKB" id="Q9UNP4"/>
    </source>
</evidence>
<evidence type="ECO:0000255" key="3"/>
<evidence type="ECO:0000305" key="4"/>